<proteinExistence type="evidence at protein level"/>
<name>WZZE_ECO57</name>
<dbReference type="EMBL" id="AE005174">
    <property type="protein sequence ID" value="AAG58980.1"/>
    <property type="status" value="ALT_INIT"/>
    <property type="molecule type" value="Genomic_DNA"/>
</dbReference>
<dbReference type="EMBL" id="BA000007">
    <property type="protein sequence ID" value="BAB38141.2"/>
    <property type="molecule type" value="Genomic_DNA"/>
</dbReference>
<dbReference type="PIR" id="F91218">
    <property type="entry name" value="F91218"/>
</dbReference>
<dbReference type="PIR" id="H86064">
    <property type="entry name" value="H86064"/>
</dbReference>
<dbReference type="RefSeq" id="NP_312745.2">
    <property type="nucleotide sequence ID" value="NC_002695.1"/>
</dbReference>
<dbReference type="RefSeq" id="WP_001295256.1">
    <property type="nucleotide sequence ID" value="NZ_VOAI01000017.1"/>
</dbReference>
<dbReference type="PDB" id="3B8O">
    <property type="method" value="X-ray"/>
    <property type="resolution" value="2.40 A"/>
    <property type="chains" value="A/B/C/D/E/F/G/H=54-318"/>
</dbReference>
<dbReference type="PDB" id="4WL1">
    <property type="method" value="X-ray"/>
    <property type="resolution" value="5.99 A"/>
    <property type="chains" value="A/B/C/D/E/F/G/H/I/J/K/L/M/N/O/P/Q/R/S/T/U/V/W/X/Y/Z/a/b/c/d/e/f=2-348"/>
</dbReference>
<dbReference type="PDBsum" id="3B8O"/>
<dbReference type="PDBsum" id="4WL1"/>
<dbReference type="SMR" id="P0AG01"/>
<dbReference type="DIP" id="DIP-46395N"/>
<dbReference type="STRING" id="155864.Z5296"/>
<dbReference type="GeneID" id="915243"/>
<dbReference type="GeneID" id="93778159"/>
<dbReference type="KEGG" id="ece:Z5296"/>
<dbReference type="KEGG" id="ecs:ECs_4718"/>
<dbReference type="PATRIC" id="fig|386585.9.peg.4922"/>
<dbReference type="eggNOG" id="COG3765">
    <property type="taxonomic scope" value="Bacteria"/>
</dbReference>
<dbReference type="HOGENOM" id="CLU_060925_2_1_6"/>
<dbReference type="OMA" id="GLCCTLW"/>
<dbReference type="UniPathway" id="UPA00566"/>
<dbReference type="EvolutionaryTrace" id="P0AG01"/>
<dbReference type="Proteomes" id="UP000000558">
    <property type="component" value="Chromosome"/>
</dbReference>
<dbReference type="Proteomes" id="UP000002519">
    <property type="component" value="Chromosome"/>
</dbReference>
<dbReference type="GO" id="GO:0005886">
    <property type="term" value="C:plasma membrane"/>
    <property type="evidence" value="ECO:0007669"/>
    <property type="project" value="UniProtKB-SubCell"/>
</dbReference>
<dbReference type="GO" id="GO:0042802">
    <property type="term" value="F:identical protein binding"/>
    <property type="evidence" value="ECO:0000353"/>
    <property type="project" value="IntAct"/>
</dbReference>
<dbReference type="GO" id="GO:0004713">
    <property type="term" value="F:protein tyrosine kinase activity"/>
    <property type="evidence" value="ECO:0007669"/>
    <property type="project" value="TreeGrafter"/>
</dbReference>
<dbReference type="GO" id="GO:0009246">
    <property type="term" value="P:enterobacterial common antigen biosynthetic process"/>
    <property type="evidence" value="ECO:0007669"/>
    <property type="project" value="UniProtKB-UniRule"/>
</dbReference>
<dbReference type="Gene3D" id="3.30.1890.10">
    <property type="entry name" value="FepE-like"/>
    <property type="match status" value="1"/>
</dbReference>
<dbReference type="HAMAP" id="MF_02025">
    <property type="entry name" value="WzzE"/>
    <property type="match status" value="1"/>
</dbReference>
<dbReference type="InterPro" id="IPR050445">
    <property type="entry name" value="Bact_polysacc_biosynth/exp"/>
</dbReference>
<dbReference type="InterPro" id="IPR003856">
    <property type="entry name" value="LPS_length_determ_N_term"/>
</dbReference>
<dbReference type="InterPro" id="IPR032895">
    <property type="entry name" value="WzzE"/>
</dbReference>
<dbReference type="NCBIfam" id="NF008645">
    <property type="entry name" value="PRK11638.1"/>
    <property type="match status" value="1"/>
</dbReference>
<dbReference type="PANTHER" id="PTHR32309:SF16">
    <property type="entry name" value="ECA POLYSACCHARIDE CHAIN LENGTH MODULATION PROTEIN"/>
    <property type="match status" value="1"/>
</dbReference>
<dbReference type="PANTHER" id="PTHR32309">
    <property type="entry name" value="TYROSINE-PROTEIN KINASE"/>
    <property type="match status" value="1"/>
</dbReference>
<dbReference type="Pfam" id="PF02706">
    <property type="entry name" value="Wzz"/>
    <property type="match status" value="1"/>
</dbReference>
<dbReference type="SUPFAM" id="SSF160355">
    <property type="entry name" value="Bacterial polysaccharide co-polymerase-like"/>
    <property type="match status" value="1"/>
</dbReference>
<gene>
    <name evidence="1" type="primary">wzzE</name>
    <name type="synonym">wzz</name>
    <name type="ordered locus">Z5296</name>
    <name type="ordered locus">ECs4718</name>
</gene>
<sequence>MTQPMPGKPAEDAENELDIRGLFRTLWAGKLWIIGMGLAFALIALAYTFFARQEWSSTAITDRPTVNMLGGYYSQQQFLRNLDVRSNMASADQPSVMDEAYKEFVMQLASWDTRREFWLQTDYYKQRMVGNSKADAALLDEMINNIQFIPGDFTRAVNDSVKLIAETAPDANNLLRQYVAFASQRAASHLNDELKGAWAARTIQMKAQVKRQEEVAKAIYDRRMNSIEQALKIAEQHNISRSATDVPAEELPDSEMFLLGRPMLQARLENLQAVGPAFDLDYDQNRAMLNTLNVGPTLDPRFQTYRYLRTPEEPVKRDSPRRAFLMIMWGIVGGLIGAGVALTRRCSK</sequence>
<evidence type="ECO:0000255" key="1">
    <source>
        <dbReference type="HAMAP-Rule" id="MF_02025"/>
    </source>
</evidence>
<evidence type="ECO:0000269" key="2">
    <source>
    </source>
</evidence>
<evidence type="ECO:0000269" key="3">
    <source>
    </source>
</evidence>
<evidence type="ECO:0000305" key="4"/>
<evidence type="ECO:0007829" key="5">
    <source>
        <dbReference type="PDB" id="3B8O"/>
    </source>
</evidence>
<protein>
    <recommendedName>
        <fullName evidence="1">ECA polysaccharide chain length modulation protein</fullName>
    </recommendedName>
</protein>
<feature type="chain" id="PRO_0000065997" description="ECA polysaccharide chain length modulation protein">
    <location>
        <begin position="1"/>
        <end position="348"/>
    </location>
</feature>
<feature type="topological domain" description="Cytoplasmic" evidence="4">
    <location>
        <begin position="1"/>
        <end position="30"/>
    </location>
</feature>
<feature type="transmembrane region" description="Helical" evidence="1">
    <location>
        <begin position="31"/>
        <end position="51"/>
    </location>
</feature>
<feature type="topological domain" description="Periplasmic" evidence="4">
    <location>
        <begin position="52"/>
        <end position="322"/>
    </location>
</feature>
<feature type="transmembrane region" description="Helical" evidence="1">
    <location>
        <begin position="323"/>
        <end position="343"/>
    </location>
</feature>
<feature type="topological domain" description="Cytoplasmic" evidence="4">
    <location>
        <begin position="344"/>
        <end position="348"/>
    </location>
</feature>
<feature type="strand" evidence="5">
    <location>
        <begin position="55"/>
        <end position="62"/>
    </location>
</feature>
<feature type="helix" evidence="5">
    <location>
        <begin position="66"/>
        <end position="69"/>
    </location>
</feature>
<feature type="helix" evidence="5">
    <location>
        <begin position="71"/>
        <end position="80"/>
    </location>
</feature>
<feature type="helix" evidence="5">
    <location>
        <begin position="96"/>
        <end position="109"/>
    </location>
</feature>
<feature type="helix" evidence="5">
    <location>
        <begin position="111"/>
        <end position="119"/>
    </location>
</feature>
<feature type="helix" evidence="5">
    <location>
        <begin position="122"/>
        <end position="125"/>
    </location>
</feature>
<feature type="helix" evidence="5">
    <location>
        <begin position="132"/>
        <end position="143"/>
    </location>
</feature>
<feature type="strand" evidence="5">
    <location>
        <begin position="146"/>
        <end position="149"/>
    </location>
</feature>
<feature type="turn" evidence="5">
    <location>
        <begin position="153"/>
        <end position="156"/>
    </location>
</feature>
<feature type="strand" evidence="5">
    <location>
        <begin position="160"/>
        <end position="167"/>
    </location>
</feature>
<feature type="helix" evidence="5">
    <location>
        <begin position="168"/>
        <end position="228"/>
    </location>
</feature>
<feature type="helix" evidence="5">
    <location>
        <begin position="266"/>
        <end position="274"/>
    </location>
</feature>
<feature type="helix" evidence="5">
    <location>
        <begin position="280"/>
        <end position="294"/>
    </location>
</feature>
<feature type="strand" evidence="5">
    <location>
        <begin position="306"/>
        <end position="309"/>
    </location>
</feature>
<comment type="function">
    <text evidence="1">Modulates the polysaccharide chain length of enterobacterial common antigen (ECA).</text>
</comment>
<comment type="pathway">
    <text evidence="1">Bacterial outer membrane biogenesis; enterobacterial common antigen biosynthesis.</text>
</comment>
<comment type="subunit">
    <text evidence="1 2 3">Homooctamer (PubMed:18204465, PubMed:25307743). Probably part of a complex composed of WzxE, WzyE and WzzE (By similarity).</text>
</comment>
<comment type="interaction">
    <interactant intactId="EBI-15680585">
        <id>P0AG01</id>
    </interactant>
    <interactant intactId="EBI-15680585">
        <id>P0AG01</id>
        <label>wzzE</label>
    </interactant>
    <organismsDiffer>false</organismsDiffer>
    <experiments>5</experiments>
</comment>
<comment type="subcellular location">
    <subcellularLocation>
        <location evidence="1 3">Cell inner membrane</location>
        <topology evidence="1">Multi-pass membrane protein</topology>
    </subcellularLocation>
</comment>
<comment type="similarity">
    <text evidence="1">Belongs to the WzzB/Cld/Rol family.</text>
</comment>
<comment type="sequence caution" evidence="4">
    <conflict type="erroneous initiation">
        <sequence resource="EMBL-CDS" id="AAG58980"/>
    </conflict>
    <text>Extended N-terminus.</text>
</comment>
<keyword id="KW-0002">3D-structure</keyword>
<keyword id="KW-0997">Cell inner membrane</keyword>
<keyword id="KW-1003">Cell membrane</keyword>
<keyword id="KW-0472">Membrane</keyword>
<keyword id="KW-1185">Reference proteome</keyword>
<keyword id="KW-0812">Transmembrane</keyword>
<keyword id="KW-1133">Transmembrane helix</keyword>
<organism>
    <name type="scientific">Escherichia coli O157:H7</name>
    <dbReference type="NCBI Taxonomy" id="83334"/>
    <lineage>
        <taxon>Bacteria</taxon>
        <taxon>Pseudomonadati</taxon>
        <taxon>Pseudomonadota</taxon>
        <taxon>Gammaproteobacteria</taxon>
        <taxon>Enterobacterales</taxon>
        <taxon>Enterobacteriaceae</taxon>
        <taxon>Escherichia</taxon>
    </lineage>
</organism>
<reference key="1">
    <citation type="journal article" date="2001" name="Nature">
        <title>Genome sequence of enterohaemorrhagic Escherichia coli O157:H7.</title>
        <authorList>
            <person name="Perna N.T."/>
            <person name="Plunkett G. III"/>
            <person name="Burland V."/>
            <person name="Mau B."/>
            <person name="Glasner J.D."/>
            <person name="Rose D.J."/>
            <person name="Mayhew G.F."/>
            <person name="Evans P.S."/>
            <person name="Gregor J."/>
            <person name="Kirkpatrick H.A."/>
            <person name="Posfai G."/>
            <person name="Hackett J."/>
            <person name="Klink S."/>
            <person name="Boutin A."/>
            <person name="Shao Y."/>
            <person name="Miller L."/>
            <person name="Grotbeck E.J."/>
            <person name="Davis N.W."/>
            <person name="Lim A."/>
            <person name="Dimalanta E.T."/>
            <person name="Potamousis K."/>
            <person name="Apodaca J."/>
            <person name="Anantharaman T.S."/>
            <person name="Lin J."/>
            <person name="Yen G."/>
            <person name="Schwartz D.C."/>
            <person name="Welch R.A."/>
            <person name="Blattner F.R."/>
        </authorList>
    </citation>
    <scope>NUCLEOTIDE SEQUENCE [LARGE SCALE GENOMIC DNA]</scope>
    <source>
        <strain>O157:H7 / EDL933 / ATCC 700927 / EHEC</strain>
    </source>
</reference>
<reference key="2">
    <citation type="journal article" date="2001" name="DNA Res.">
        <title>Complete genome sequence of enterohemorrhagic Escherichia coli O157:H7 and genomic comparison with a laboratory strain K-12.</title>
        <authorList>
            <person name="Hayashi T."/>
            <person name="Makino K."/>
            <person name="Ohnishi M."/>
            <person name="Kurokawa K."/>
            <person name="Ishii K."/>
            <person name="Yokoyama K."/>
            <person name="Han C.-G."/>
            <person name="Ohtsubo E."/>
            <person name="Nakayama K."/>
            <person name="Murata T."/>
            <person name="Tanaka M."/>
            <person name="Tobe T."/>
            <person name="Iida T."/>
            <person name="Takami H."/>
            <person name="Honda T."/>
            <person name="Sasakawa C."/>
            <person name="Ogasawara N."/>
            <person name="Yasunaga T."/>
            <person name="Kuhara S."/>
            <person name="Shiba T."/>
            <person name="Hattori M."/>
            <person name="Shinagawa H."/>
        </authorList>
    </citation>
    <scope>NUCLEOTIDE SEQUENCE [LARGE SCALE GENOMIC DNA]</scope>
    <source>
        <strain>O157:H7 / Sakai / RIMD 0509952 / EHEC</strain>
    </source>
</reference>
<reference key="3">
    <citation type="journal article" date="2008" name="Nat. Struct. Mol. Biol.">
        <title>Bacterial polysaccharide co-polymerases share a common framework for control of polymer length.</title>
        <authorList>
            <person name="Tocilj A."/>
            <person name="Munger C."/>
            <person name="Proteau A."/>
            <person name="Morona R."/>
            <person name="Purins L."/>
            <person name="Ajamian E."/>
            <person name="Wagner J."/>
            <person name="Papadopoulos M."/>
            <person name="Van Den Bosch L."/>
            <person name="Rubinstein J.L."/>
            <person name="Fethiere J."/>
            <person name="Matte A."/>
            <person name="Cygler M."/>
        </authorList>
    </citation>
    <scope>X-RAY CRYSTALLOGRAPHY (2.40 ANGSTROMS) OF 54-318</scope>
    <scope>SUBUNIT</scope>
    <source>
        <strain>O157:H7 / EDL933 / ATCC 700927 / EHEC</strain>
    </source>
</reference>
<reference key="4">
    <citation type="journal article" date="2015" name="Protein Sci.">
        <title>Quaternary structure of WzzB and WzzE polysaccharide copolymerases.</title>
        <authorList>
            <person name="Kalynych S."/>
            <person name="Cherney M."/>
            <person name="Bostina M."/>
            <person name="Rouiller I."/>
            <person name="Cygler M."/>
        </authorList>
    </citation>
    <scope>X-RAY CRYSTALLOGRAPHY (5.99 ANGSTROMS) OF 2-348</scope>
    <scope>SUBUNIT</scope>
    <scope>SUBCELLULAR LOCATION</scope>
    <source>
        <strain>O157:H7 / EDL933 / ATCC 700927 / EHEC</strain>
    </source>
</reference>
<accession>P0AG01</accession>
<accession>P25905</accession>
<accession>P76752</accession>